<keyword id="KW-1185">Reference proteome</keyword>
<keyword id="KW-0687">Ribonucleoprotein</keyword>
<keyword id="KW-0689">Ribosomal protein</keyword>
<keyword id="KW-0694">RNA-binding</keyword>
<keyword id="KW-0699">rRNA-binding</keyword>
<comment type="function">
    <text evidence="1">Binds together with bS18 to 16S ribosomal RNA.</text>
</comment>
<comment type="similarity">
    <text evidence="1">Belongs to the bacterial ribosomal protein bS6 family.</text>
</comment>
<gene>
    <name evidence="1" type="primary">rpsF</name>
    <name type="ordered locus">Veis_0981</name>
</gene>
<feature type="chain" id="PRO_1000005381" description="Small ribosomal subunit protein bS6">
    <location>
        <begin position="1"/>
        <end position="141"/>
    </location>
</feature>
<feature type="region of interest" description="Disordered" evidence="2">
    <location>
        <begin position="96"/>
        <end position="141"/>
    </location>
</feature>
<feature type="compositionally biased region" description="Low complexity" evidence="2">
    <location>
        <begin position="123"/>
        <end position="141"/>
    </location>
</feature>
<name>RS6_VEREI</name>
<reference key="1">
    <citation type="submission" date="2006-12" db="EMBL/GenBank/DDBJ databases">
        <title>Complete sequence of chromosome 1 of Verminephrobacter eiseniae EF01-2.</title>
        <authorList>
            <person name="Copeland A."/>
            <person name="Lucas S."/>
            <person name="Lapidus A."/>
            <person name="Barry K."/>
            <person name="Detter J.C."/>
            <person name="Glavina del Rio T."/>
            <person name="Dalin E."/>
            <person name="Tice H."/>
            <person name="Pitluck S."/>
            <person name="Chertkov O."/>
            <person name="Brettin T."/>
            <person name="Bruce D."/>
            <person name="Han C."/>
            <person name="Tapia R."/>
            <person name="Gilna P."/>
            <person name="Schmutz J."/>
            <person name="Larimer F."/>
            <person name="Land M."/>
            <person name="Hauser L."/>
            <person name="Kyrpides N."/>
            <person name="Kim E."/>
            <person name="Stahl D."/>
            <person name="Richardson P."/>
        </authorList>
    </citation>
    <scope>NUCLEOTIDE SEQUENCE [LARGE SCALE GENOMIC DNA]</scope>
    <source>
        <strain>EF01-2</strain>
    </source>
</reference>
<evidence type="ECO:0000255" key="1">
    <source>
        <dbReference type="HAMAP-Rule" id="MF_00360"/>
    </source>
</evidence>
<evidence type="ECO:0000256" key="2">
    <source>
        <dbReference type="SAM" id="MobiDB-lite"/>
    </source>
</evidence>
<evidence type="ECO:0000305" key="3"/>
<dbReference type="EMBL" id="CP000542">
    <property type="protein sequence ID" value="ABM56758.1"/>
    <property type="molecule type" value="Genomic_DNA"/>
</dbReference>
<dbReference type="RefSeq" id="WP_011808771.1">
    <property type="nucleotide sequence ID" value="NC_008786.1"/>
</dbReference>
<dbReference type="SMR" id="A1WGK1"/>
<dbReference type="STRING" id="391735.Veis_0981"/>
<dbReference type="GeneID" id="76459658"/>
<dbReference type="KEGG" id="vei:Veis_0981"/>
<dbReference type="eggNOG" id="COG0360">
    <property type="taxonomic scope" value="Bacteria"/>
</dbReference>
<dbReference type="HOGENOM" id="CLU_113441_6_1_4"/>
<dbReference type="OrthoDB" id="9812702at2"/>
<dbReference type="Proteomes" id="UP000000374">
    <property type="component" value="Chromosome"/>
</dbReference>
<dbReference type="GO" id="GO:0022627">
    <property type="term" value="C:cytosolic small ribosomal subunit"/>
    <property type="evidence" value="ECO:0007669"/>
    <property type="project" value="TreeGrafter"/>
</dbReference>
<dbReference type="GO" id="GO:0070181">
    <property type="term" value="F:small ribosomal subunit rRNA binding"/>
    <property type="evidence" value="ECO:0007669"/>
    <property type="project" value="TreeGrafter"/>
</dbReference>
<dbReference type="GO" id="GO:0003735">
    <property type="term" value="F:structural constituent of ribosome"/>
    <property type="evidence" value="ECO:0007669"/>
    <property type="project" value="InterPro"/>
</dbReference>
<dbReference type="GO" id="GO:0006412">
    <property type="term" value="P:translation"/>
    <property type="evidence" value="ECO:0007669"/>
    <property type="project" value="UniProtKB-UniRule"/>
</dbReference>
<dbReference type="CDD" id="cd00473">
    <property type="entry name" value="bS6"/>
    <property type="match status" value="1"/>
</dbReference>
<dbReference type="Gene3D" id="3.30.70.60">
    <property type="match status" value="1"/>
</dbReference>
<dbReference type="HAMAP" id="MF_00360">
    <property type="entry name" value="Ribosomal_bS6"/>
    <property type="match status" value="1"/>
</dbReference>
<dbReference type="InterPro" id="IPR000529">
    <property type="entry name" value="Ribosomal_bS6"/>
</dbReference>
<dbReference type="InterPro" id="IPR020815">
    <property type="entry name" value="Ribosomal_bS6_CS"/>
</dbReference>
<dbReference type="InterPro" id="IPR035980">
    <property type="entry name" value="Ribosomal_bS6_sf"/>
</dbReference>
<dbReference type="InterPro" id="IPR020814">
    <property type="entry name" value="Ribosomal_S6_plastid/chlpt"/>
</dbReference>
<dbReference type="InterPro" id="IPR014717">
    <property type="entry name" value="Transl_elong_EF1B/ribsomal_bS6"/>
</dbReference>
<dbReference type="NCBIfam" id="TIGR00166">
    <property type="entry name" value="S6"/>
    <property type="match status" value="1"/>
</dbReference>
<dbReference type="PANTHER" id="PTHR21011">
    <property type="entry name" value="MITOCHONDRIAL 28S RIBOSOMAL PROTEIN S6"/>
    <property type="match status" value="1"/>
</dbReference>
<dbReference type="PANTHER" id="PTHR21011:SF1">
    <property type="entry name" value="SMALL RIBOSOMAL SUBUNIT PROTEIN BS6M"/>
    <property type="match status" value="1"/>
</dbReference>
<dbReference type="Pfam" id="PF01250">
    <property type="entry name" value="Ribosomal_S6"/>
    <property type="match status" value="1"/>
</dbReference>
<dbReference type="SUPFAM" id="SSF54995">
    <property type="entry name" value="Ribosomal protein S6"/>
    <property type="match status" value="1"/>
</dbReference>
<dbReference type="PROSITE" id="PS01048">
    <property type="entry name" value="RIBOSOMAL_S6"/>
    <property type="match status" value="1"/>
</dbReference>
<proteinExistence type="inferred from homology"/>
<protein>
    <recommendedName>
        <fullName evidence="1">Small ribosomal subunit protein bS6</fullName>
    </recommendedName>
    <alternativeName>
        <fullName evidence="3">30S ribosomal protein S6</fullName>
    </alternativeName>
</protein>
<sequence length="141" mass="15615">MRHYEIILLIHPDQSEQVPAMLERYKGMIAAGGGKVHRVEDWGRRQLAYLINKLSKAHYLCVNIEADQAVMAELEHAFKFNDAVLRHLTVHKKKAVTGPSAMMKTVEREEFRKASQAGNQTTAPAASPADHAAAPASADRS</sequence>
<organism>
    <name type="scientific">Verminephrobacter eiseniae (strain EF01-2)</name>
    <dbReference type="NCBI Taxonomy" id="391735"/>
    <lineage>
        <taxon>Bacteria</taxon>
        <taxon>Pseudomonadati</taxon>
        <taxon>Pseudomonadota</taxon>
        <taxon>Betaproteobacteria</taxon>
        <taxon>Burkholderiales</taxon>
        <taxon>Comamonadaceae</taxon>
        <taxon>Verminephrobacter</taxon>
    </lineage>
</organism>
<accession>A1WGK1</accession>